<protein>
    <recommendedName>
        <fullName evidence="2">Small ribosomal subunit protein uS12</fullName>
    </recommendedName>
    <alternativeName>
        <fullName evidence="4">30S ribosomal protein S12</fullName>
    </alternativeName>
</protein>
<reference key="1">
    <citation type="journal article" date="2005" name="Genome Res.">
        <title>Comparative and functional genomic analyses of the pathogenicity of phytopathogen Xanthomonas campestris pv. campestris.</title>
        <authorList>
            <person name="Qian W."/>
            <person name="Jia Y."/>
            <person name="Ren S.-X."/>
            <person name="He Y.-Q."/>
            <person name="Feng J.-X."/>
            <person name="Lu L.-F."/>
            <person name="Sun Q."/>
            <person name="Ying G."/>
            <person name="Tang D.-J."/>
            <person name="Tang H."/>
            <person name="Wu W."/>
            <person name="Hao P."/>
            <person name="Wang L."/>
            <person name="Jiang B.-L."/>
            <person name="Zeng S."/>
            <person name="Gu W.-Y."/>
            <person name="Lu G."/>
            <person name="Rong L."/>
            <person name="Tian Y."/>
            <person name="Yao Z."/>
            <person name="Fu G."/>
            <person name="Chen B."/>
            <person name="Fang R."/>
            <person name="Qiang B."/>
            <person name="Chen Z."/>
            <person name="Zhao G.-P."/>
            <person name="Tang J.-L."/>
            <person name="He C."/>
        </authorList>
    </citation>
    <scope>NUCLEOTIDE SEQUENCE [LARGE SCALE GENOMIC DNA]</scope>
    <source>
        <strain>8004</strain>
    </source>
</reference>
<accession>Q4URD4</accession>
<feature type="chain" id="PRO_0000226424" description="Small ribosomal subunit protein uS12">
    <location>
        <begin position="1"/>
        <end position="124"/>
    </location>
</feature>
<feature type="region of interest" description="Disordered" evidence="3">
    <location>
        <begin position="1"/>
        <end position="25"/>
    </location>
</feature>
<feature type="modified residue" description="3-methylthioaspartic acid" evidence="1">
    <location>
        <position position="89"/>
    </location>
</feature>
<gene>
    <name evidence="2" type="primary">rpsL</name>
    <name type="ordered locus">XC_3345</name>
</gene>
<sequence length="124" mass="13723">MATINQLVRKPRQATTYKSASPALDKCPQRRGVCTRVYTTTPKKPNSALRKVAKVRLTNQEEVISYIGGEGHNLQEHSVVLIRGGRVKDLPGVRYHTVRGSLDAAGVAKRRQGRSKYGAKRPKS</sequence>
<keyword id="KW-0488">Methylation</keyword>
<keyword id="KW-0687">Ribonucleoprotein</keyword>
<keyword id="KW-0689">Ribosomal protein</keyword>
<keyword id="KW-0694">RNA-binding</keyword>
<keyword id="KW-0699">rRNA-binding</keyword>
<keyword id="KW-0820">tRNA-binding</keyword>
<evidence type="ECO:0000250" key="1"/>
<evidence type="ECO:0000255" key="2">
    <source>
        <dbReference type="HAMAP-Rule" id="MF_00403"/>
    </source>
</evidence>
<evidence type="ECO:0000256" key="3">
    <source>
        <dbReference type="SAM" id="MobiDB-lite"/>
    </source>
</evidence>
<evidence type="ECO:0000305" key="4"/>
<comment type="function">
    <text evidence="2">With S4 and S5 plays an important role in translational accuracy.</text>
</comment>
<comment type="function">
    <text evidence="2">Interacts with and stabilizes bases of the 16S rRNA that are involved in tRNA selection in the A site and with the mRNA backbone. Located at the interface of the 30S and 50S subunits, it traverses the body of the 30S subunit contacting proteins on the other side and probably holding the rRNA structure together. The combined cluster of proteins S8, S12 and S17 appears to hold together the shoulder and platform of the 30S subunit.</text>
</comment>
<comment type="subunit">
    <text evidence="2">Part of the 30S ribosomal subunit. Contacts proteins S8 and S17. May interact with IF1 in the 30S initiation complex.</text>
</comment>
<comment type="similarity">
    <text evidence="2">Belongs to the universal ribosomal protein uS12 family.</text>
</comment>
<name>RS12_XANC8</name>
<dbReference type="EMBL" id="CP000050">
    <property type="protein sequence ID" value="AAY50389.1"/>
    <property type="molecule type" value="Genomic_DNA"/>
</dbReference>
<dbReference type="RefSeq" id="WP_003469157.1">
    <property type="nucleotide sequence ID" value="NZ_CP155948.1"/>
</dbReference>
<dbReference type="SMR" id="Q4URD4"/>
<dbReference type="GeneID" id="93986250"/>
<dbReference type="KEGG" id="xcb:XC_3345"/>
<dbReference type="HOGENOM" id="CLU_104295_1_2_6"/>
<dbReference type="Proteomes" id="UP000000420">
    <property type="component" value="Chromosome"/>
</dbReference>
<dbReference type="GO" id="GO:0015935">
    <property type="term" value="C:small ribosomal subunit"/>
    <property type="evidence" value="ECO:0007669"/>
    <property type="project" value="InterPro"/>
</dbReference>
<dbReference type="GO" id="GO:0019843">
    <property type="term" value="F:rRNA binding"/>
    <property type="evidence" value="ECO:0007669"/>
    <property type="project" value="UniProtKB-UniRule"/>
</dbReference>
<dbReference type="GO" id="GO:0003735">
    <property type="term" value="F:structural constituent of ribosome"/>
    <property type="evidence" value="ECO:0007669"/>
    <property type="project" value="InterPro"/>
</dbReference>
<dbReference type="GO" id="GO:0000049">
    <property type="term" value="F:tRNA binding"/>
    <property type="evidence" value="ECO:0007669"/>
    <property type="project" value="UniProtKB-UniRule"/>
</dbReference>
<dbReference type="GO" id="GO:0006412">
    <property type="term" value="P:translation"/>
    <property type="evidence" value="ECO:0007669"/>
    <property type="project" value="UniProtKB-UniRule"/>
</dbReference>
<dbReference type="CDD" id="cd03368">
    <property type="entry name" value="Ribosomal_S12"/>
    <property type="match status" value="1"/>
</dbReference>
<dbReference type="FunFam" id="2.40.50.140:FF:000001">
    <property type="entry name" value="30S ribosomal protein S12"/>
    <property type="match status" value="1"/>
</dbReference>
<dbReference type="Gene3D" id="2.40.50.140">
    <property type="entry name" value="Nucleic acid-binding proteins"/>
    <property type="match status" value="1"/>
</dbReference>
<dbReference type="HAMAP" id="MF_00403_B">
    <property type="entry name" value="Ribosomal_uS12_B"/>
    <property type="match status" value="1"/>
</dbReference>
<dbReference type="InterPro" id="IPR012340">
    <property type="entry name" value="NA-bd_OB-fold"/>
</dbReference>
<dbReference type="InterPro" id="IPR006032">
    <property type="entry name" value="Ribosomal_uS12"/>
</dbReference>
<dbReference type="InterPro" id="IPR005679">
    <property type="entry name" value="Ribosomal_uS12_bac"/>
</dbReference>
<dbReference type="NCBIfam" id="TIGR00981">
    <property type="entry name" value="rpsL_bact"/>
    <property type="match status" value="1"/>
</dbReference>
<dbReference type="PANTHER" id="PTHR11652">
    <property type="entry name" value="30S RIBOSOMAL PROTEIN S12 FAMILY MEMBER"/>
    <property type="match status" value="1"/>
</dbReference>
<dbReference type="Pfam" id="PF00164">
    <property type="entry name" value="Ribosom_S12_S23"/>
    <property type="match status" value="1"/>
</dbReference>
<dbReference type="PIRSF" id="PIRSF002133">
    <property type="entry name" value="Ribosomal_S12/S23"/>
    <property type="match status" value="1"/>
</dbReference>
<dbReference type="PRINTS" id="PR01034">
    <property type="entry name" value="RIBOSOMALS12"/>
</dbReference>
<dbReference type="SUPFAM" id="SSF50249">
    <property type="entry name" value="Nucleic acid-binding proteins"/>
    <property type="match status" value="1"/>
</dbReference>
<dbReference type="PROSITE" id="PS00055">
    <property type="entry name" value="RIBOSOMAL_S12"/>
    <property type="match status" value="1"/>
</dbReference>
<organism>
    <name type="scientific">Xanthomonas campestris pv. campestris (strain 8004)</name>
    <dbReference type="NCBI Taxonomy" id="314565"/>
    <lineage>
        <taxon>Bacteria</taxon>
        <taxon>Pseudomonadati</taxon>
        <taxon>Pseudomonadota</taxon>
        <taxon>Gammaproteobacteria</taxon>
        <taxon>Lysobacterales</taxon>
        <taxon>Lysobacteraceae</taxon>
        <taxon>Xanthomonas</taxon>
    </lineage>
</organism>
<proteinExistence type="inferred from homology"/>